<gene>
    <name evidence="1" type="primary">rplE</name>
    <name type="ordered locus">Cj1695c</name>
</gene>
<comment type="function">
    <text evidence="1">This is one of the proteins that bind and probably mediate the attachment of the 5S RNA into the large ribosomal subunit, where it forms part of the central protuberance. In the 70S ribosome it contacts protein S13 of the 30S subunit (bridge B1b), connecting the 2 subunits; this bridge is implicated in subunit movement. Contacts the P site tRNA; the 5S rRNA and some of its associated proteins might help stabilize positioning of ribosome-bound tRNAs.</text>
</comment>
<comment type="subunit">
    <text evidence="1">Part of the 50S ribosomal subunit; part of the 5S rRNA/L5/L18/L25 subcomplex. Contacts the 5S rRNA and the P site tRNA. Forms a bridge to the 30S subunit in the 70S ribosome.</text>
</comment>
<comment type="similarity">
    <text evidence="1">Belongs to the universal ribosomal protein uL5 family.</text>
</comment>
<protein>
    <recommendedName>
        <fullName evidence="1">Large ribosomal subunit protein uL5</fullName>
    </recommendedName>
    <alternativeName>
        <fullName evidence="2">50S ribosomal protein L5</fullName>
    </alternativeName>
</protein>
<proteinExistence type="inferred from homology"/>
<accession>Q9PLY3</accession>
<accession>Q0P7T6</accession>
<name>RL5_CAMJE</name>
<organism>
    <name type="scientific">Campylobacter jejuni subsp. jejuni serotype O:2 (strain ATCC 700819 / NCTC 11168)</name>
    <dbReference type="NCBI Taxonomy" id="192222"/>
    <lineage>
        <taxon>Bacteria</taxon>
        <taxon>Pseudomonadati</taxon>
        <taxon>Campylobacterota</taxon>
        <taxon>Epsilonproteobacteria</taxon>
        <taxon>Campylobacterales</taxon>
        <taxon>Campylobacteraceae</taxon>
        <taxon>Campylobacter</taxon>
    </lineage>
</organism>
<evidence type="ECO:0000255" key="1">
    <source>
        <dbReference type="HAMAP-Rule" id="MF_01333"/>
    </source>
</evidence>
<evidence type="ECO:0000305" key="2"/>
<dbReference type="EMBL" id="AL111168">
    <property type="protein sequence ID" value="CAL35789.1"/>
    <property type="molecule type" value="Genomic_DNA"/>
</dbReference>
<dbReference type="PIR" id="C81267">
    <property type="entry name" value="C81267"/>
</dbReference>
<dbReference type="RefSeq" id="WP_002851453.1">
    <property type="nucleotide sequence ID" value="NZ_SZUC01000002.1"/>
</dbReference>
<dbReference type="RefSeq" id="YP_002345061.1">
    <property type="nucleotide sequence ID" value="NC_002163.1"/>
</dbReference>
<dbReference type="SMR" id="Q9PLY3"/>
<dbReference type="IntAct" id="Q9PLY3">
    <property type="interactions" value="4"/>
</dbReference>
<dbReference type="STRING" id="192222.Cj1695c"/>
<dbReference type="PaxDb" id="192222-Cj1695c"/>
<dbReference type="EnsemblBacteria" id="CAL35789">
    <property type="protein sequence ID" value="CAL35789"/>
    <property type="gene ID" value="Cj1695c"/>
</dbReference>
<dbReference type="GeneID" id="905969"/>
<dbReference type="KEGG" id="cje:Cj1695c"/>
<dbReference type="PATRIC" id="fig|192222.6.peg.1669"/>
<dbReference type="eggNOG" id="COG0094">
    <property type="taxonomic scope" value="Bacteria"/>
</dbReference>
<dbReference type="HOGENOM" id="CLU_061015_2_1_7"/>
<dbReference type="OrthoDB" id="9806626at2"/>
<dbReference type="Proteomes" id="UP000000799">
    <property type="component" value="Chromosome"/>
</dbReference>
<dbReference type="GO" id="GO:1990904">
    <property type="term" value="C:ribonucleoprotein complex"/>
    <property type="evidence" value="ECO:0007669"/>
    <property type="project" value="UniProtKB-KW"/>
</dbReference>
<dbReference type="GO" id="GO:0005840">
    <property type="term" value="C:ribosome"/>
    <property type="evidence" value="ECO:0007669"/>
    <property type="project" value="UniProtKB-KW"/>
</dbReference>
<dbReference type="GO" id="GO:0019843">
    <property type="term" value="F:rRNA binding"/>
    <property type="evidence" value="ECO:0007669"/>
    <property type="project" value="UniProtKB-UniRule"/>
</dbReference>
<dbReference type="GO" id="GO:0003735">
    <property type="term" value="F:structural constituent of ribosome"/>
    <property type="evidence" value="ECO:0007669"/>
    <property type="project" value="InterPro"/>
</dbReference>
<dbReference type="GO" id="GO:0000049">
    <property type="term" value="F:tRNA binding"/>
    <property type="evidence" value="ECO:0007669"/>
    <property type="project" value="UniProtKB-UniRule"/>
</dbReference>
<dbReference type="GO" id="GO:0006412">
    <property type="term" value="P:translation"/>
    <property type="evidence" value="ECO:0007669"/>
    <property type="project" value="UniProtKB-UniRule"/>
</dbReference>
<dbReference type="FunFam" id="3.30.1440.10:FF:000001">
    <property type="entry name" value="50S ribosomal protein L5"/>
    <property type="match status" value="1"/>
</dbReference>
<dbReference type="Gene3D" id="3.30.1440.10">
    <property type="match status" value="1"/>
</dbReference>
<dbReference type="HAMAP" id="MF_01333_B">
    <property type="entry name" value="Ribosomal_uL5_B"/>
    <property type="match status" value="1"/>
</dbReference>
<dbReference type="InterPro" id="IPR002132">
    <property type="entry name" value="Ribosomal_uL5"/>
</dbReference>
<dbReference type="InterPro" id="IPR020930">
    <property type="entry name" value="Ribosomal_uL5_bac-type"/>
</dbReference>
<dbReference type="InterPro" id="IPR031309">
    <property type="entry name" value="Ribosomal_uL5_C"/>
</dbReference>
<dbReference type="InterPro" id="IPR020929">
    <property type="entry name" value="Ribosomal_uL5_CS"/>
</dbReference>
<dbReference type="InterPro" id="IPR022803">
    <property type="entry name" value="Ribosomal_uL5_dom_sf"/>
</dbReference>
<dbReference type="InterPro" id="IPR031310">
    <property type="entry name" value="Ribosomal_uL5_N"/>
</dbReference>
<dbReference type="NCBIfam" id="NF000585">
    <property type="entry name" value="PRK00010.1"/>
    <property type="match status" value="1"/>
</dbReference>
<dbReference type="PANTHER" id="PTHR11994">
    <property type="entry name" value="60S RIBOSOMAL PROTEIN L11-RELATED"/>
    <property type="match status" value="1"/>
</dbReference>
<dbReference type="Pfam" id="PF00281">
    <property type="entry name" value="Ribosomal_L5"/>
    <property type="match status" value="1"/>
</dbReference>
<dbReference type="Pfam" id="PF00673">
    <property type="entry name" value="Ribosomal_L5_C"/>
    <property type="match status" value="1"/>
</dbReference>
<dbReference type="PIRSF" id="PIRSF002161">
    <property type="entry name" value="Ribosomal_L5"/>
    <property type="match status" value="1"/>
</dbReference>
<dbReference type="SUPFAM" id="SSF55282">
    <property type="entry name" value="RL5-like"/>
    <property type="match status" value="1"/>
</dbReference>
<dbReference type="PROSITE" id="PS00358">
    <property type="entry name" value="RIBOSOMAL_L5"/>
    <property type="match status" value="1"/>
</dbReference>
<feature type="chain" id="PRO_0000124907" description="Large ribosomal subunit protein uL5">
    <location>
        <begin position="1"/>
        <end position="181"/>
    </location>
</feature>
<sequence length="181" mass="20214">MMRLKEKYNQSIKPALVKEFDIKNPMLIPVIEKVVISVGAGELAKDQKVLQNVADTISLIAGQKAVITKAKKSVAGFKVREGFPVGVMVTLRKENMYAFLDKLISIALPRVKDFRGLSRDGFDGRGNYNFGLDEQLMFPEVEYDKILRTHGMNISIVTTAQNDKQAQKLLELIGVPFTKGK</sequence>
<reference key="1">
    <citation type="journal article" date="2000" name="Nature">
        <title>The genome sequence of the food-borne pathogen Campylobacter jejuni reveals hypervariable sequences.</title>
        <authorList>
            <person name="Parkhill J."/>
            <person name="Wren B.W."/>
            <person name="Mungall K.L."/>
            <person name="Ketley J.M."/>
            <person name="Churcher C.M."/>
            <person name="Basham D."/>
            <person name="Chillingworth T."/>
            <person name="Davies R.M."/>
            <person name="Feltwell T."/>
            <person name="Holroyd S."/>
            <person name="Jagels K."/>
            <person name="Karlyshev A.V."/>
            <person name="Moule S."/>
            <person name="Pallen M.J."/>
            <person name="Penn C.W."/>
            <person name="Quail M.A."/>
            <person name="Rajandream M.A."/>
            <person name="Rutherford K.M."/>
            <person name="van Vliet A.H.M."/>
            <person name="Whitehead S."/>
            <person name="Barrell B.G."/>
        </authorList>
    </citation>
    <scope>NUCLEOTIDE SEQUENCE [LARGE SCALE GENOMIC DNA]</scope>
    <source>
        <strain>ATCC 700819 / NCTC 11168</strain>
    </source>
</reference>
<keyword id="KW-1185">Reference proteome</keyword>
<keyword id="KW-0687">Ribonucleoprotein</keyword>
<keyword id="KW-0689">Ribosomal protein</keyword>
<keyword id="KW-0694">RNA-binding</keyword>
<keyword id="KW-0699">rRNA-binding</keyword>
<keyword id="KW-0820">tRNA-binding</keyword>